<keyword id="KW-0002">3D-structure</keyword>
<keyword id="KW-0012">Acyltransferase</keyword>
<keyword id="KW-0150">Chloroplast</keyword>
<keyword id="KW-0903">Direct protein sequencing</keyword>
<keyword id="KW-0444">Lipid biosynthesis</keyword>
<keyword id="KW-0443">Lipid metabolism</keyword>
<keyword id="KW-0594">Phospholipid biosynthesis</keyword>
<keyword id="KW-1208">Phospholipid metabolism</keyword>
<keyword id="KW-0934">Plastid</keyword>
<keyword id="KW-0808">Transferase</keyword>
<keyword id="KW-0809">Transit peptide</keyword>
<reference key="1">
    <citation type="journal article" date="2000" name="Plant Cell Physiol.">
        <title>A second gene for acyl-(acyl-carrier-protein): glycerol-3-phosphate acyltransferase in squash, Cucurbita moschata cv. Shirogikuza(*), codes for an oleate-selective isozyme: molecular cloning and protein purification studies.</title>
        <authorList>
            <person name="Nishida I."/>
            <person name="Sugiura M."/>
            <person name="Enju A."/>
            <person name="Nakamura M."/>
        </authorList>
    </citation>
    <scope>NUCLEOTIDE SEQUENCE [GENOMIC DNA / MRNA]</scope>
</reference>
<reference key="2">
    <citation type="journal article" date="1988" name="FEBS Lett.">
        <title>Cloning and nucleotide sequence of cDNA for the plastid glycerol-3-phosphate acyltransferase from squash.</title>
        <authorList>
            <person name="Ishizaki O."/>
            <person name="Nishida I."/>
            <person name="Agata K."/>
            <person name="Eguchi G."/>
            <person name="Murata N."/>
        </authorList>
    </citation>
    <scope>NUCLEOTIDE SEQUENCE [MRNA] OF 26-462</scope>
    <scope>PARTIAL PROTEIN SEQUENCE</scope>
    <source>
        <strain>cv. Shirakikuza</strain>
        <tissue>Cotyledon</tissue>
    </source>
</reference>
<reference key="3">
    <citation type="journal article" date="1987" name="Plant Cell Physiol.">
        <title>Properties of the plastidial acyl-(acyl-carrier-protein): glycerol-3-phosphate acyltransferase from the chilling-sensitive plant squash (Cucurbita moschata).</title>
        <authorList>
            <person name="Frentzen M."/>
            <person name="Nishida I."/>
            <person name="Murata N."/>
        </authorList>
    </citation>
    <scope>FUNCTION</scope>
    <scope>CATALYTIC ACTIVITY</scope>
</reference>
<reference key="4">
    <citation type="journal article" date="1997" name="Arch. Biochem. Biophys.">
        <title>Substrate specificity modification of the stromal glycerol-3-phosphate acyltransferase.</title>
        <authorList>
            <person name="Ferri S.R."/>
            <person name="Toguri T."/>
        </authorList>
    </citation>
    <scope>FUNCTION</scope>
    <scope>CATALYTIC ACTIVITY</scope>
</reference>
<reference key="5">
    <citation type="journal article" date="2001" name="Structure">
        <title>Analysis of the structure, substrate specificity, and mechanism of squash glycerol-3-phosphate (1)-acyltransferase.</title>
        <authorList>
            <person name="Turnbull A.P."/>
            <person name="Rafferty J.B."/>
            <person name="Sedelnikova S.E."/>
            <person name="Slabas A.R."/>
            <person name="Schierer T.P."/>
            <person name="Kroon J.T.M."/>
            <person name="Simon J.W."/>
            <person name="Fawcett T."/>
            <person name="Nishida I."/>
            <person name="Murata N."/>
            <person name="Rice D.W."/>
        </authorList>
    </citation>
    <scope>X-RAY CRYSTALLOGRAPHY (1.9 ANGSTROMS) OF 98-462</scope>
    <scope>HXXXXD MOTIF</scope>
</reference>
<reference key="6">
    <citation type="journal article" date="2004" name="Acta Crystallogr. D">
        <title>Substrate recognition and selectivity of plant glycerol-3-phosphate acyltransferases (GPATs) from Cucurbita moscata and Spinacea oleracea.</title>
        <authorList>
            <person name="Tamada T."/>
            <person name="Feese M.D."/>
            <person name="Ferri S.R."/>
            <person name="Kato Y."/>
            <person name="Yajima R."/>
            <person name="Toguri T."/>
            <person name="Kuroki R."/>
        </authorList>
    </citation>
    <scope>X-RAY CRYSTALLOGRAPHY (1.55 ANGSTROMS) OF 98-462</scope>
    <scope>CATALYTIC ACTIVITY</scope>
</reference>
<accession>P10349</accession>
<accession>Q9FEP9</accession>
<name>GPAT2_CUCMO</name>
<proteinExistence type="evidence at protein level"/>
<organism>
    <name type="scientific">Cucurbita moschata</name>
    <name type="common">Winter crookneck squash</name>
    <name type="synonym">Cucurbita pepo var. moschata</name>
    <dbReference type="NCBI Taxonomy" id="3662"/>
    <lineage>
        <taxon>Eukaryota</taxon>
        <taxon>Viridiplantae</taxon>
        <taxon>Streptophyta</taxon>
        <taxon>Embryophyta</taxon>
        <taxon>Tracheophyta</taxon>
        <taxon>Spermatophyta</taxon>
        <taxon>Magnoliopsida</taxon>
        <taxon>eudicotyledons</taxon>
        <taxon>Gunneridae</taxon>
        <taxon>Pentapetalae</taxon>
        <taxon>rosids</taxon>
        <taxon>fabids</taxon>
        <taxon>Cucurbitales</taxon>
        <taxon>Cucurbitaceae</taxon>
        <taxon>Cucurbiteae</taxon>
        <taxon>Cucurbita</taxon>
    </lineage>
</organism>
<feature type="transit peptide" description="Chloroplast" evidence="1">
    <location>
        <begin position="1"/>
        <end position="82"/>
    </location>
</feature>
<feature type="chain" id="PRO_0000024696" description="Glycerol-3-phosphate acyltransferase ATS12, chloroplastic">
    <location>
        <begin position="83"/>
        <end position="462"/>
    </location>
</feature>
<feature type="short sequence motif" description="HXXXXD motif" evidence="8">
    <location>
        <begin position="233"/>
        <end position="238"/>
    </location>
</feature>
<feature type="helix" evidence="10">
    <location>
        <begin position="101"/>
        <end position="104"/>
    </location>
</feature>
<feature type="helix" evidence="10">
    <location>
        <begin position="108"/>
        <end position="120"/>
    </location>
</feature>
<feature type="helix" evidence="10">
    <location>
        <begin position="126"/>
        <end position="145"/>
    </location>
</feature>
<feature type="helix" evidence="10">
    <location>
        <begin position="151"/>
        <end position="171"/>
    </location>
</feature>
<feature type="strand" evidence="10">
    <location>
        <begin position="178"/>
        <end position="180"/>
    </location>
</feature>
<feature type="strand" evidence="10">
    <location>
        <begin position="185"/>
        <end position="187"/>
    </location>
</feature>
<feature type="helix" evidence="10">
    <location>
        <begin position="189"/>
        <end position="197"/>
    </location>
</feature>
<feature type="helix" evidence="10">
    <location>
        <begin position="198"/>
        <end position="200"/>
    </location>
</feature>
<feature type="helix" evidence="10">
    <location>
        <begin position="203"/>
        <end position="205"/>
    </location>
</feature>
<feature type="strand" evidence="10">
    <location>
        <begin position="207"/>
        <end position="209"/>
    </location>
</feature>
<feature type="helix" evidence="10">
    <location>
        <begin position="211"/>
        <end position="222"/>
    </location>
</feature>
<feature type="strand" evidence="10">
    <location>
        <begin position="226"/>
        <end position="231"/>
    </location>
</feature>
<feature type="helix" evidence="10">
    <location>
        <begin position="238"/>
        <end position="246"/>
    </location>
</feature>
<feature type="turn" evidence="10">
    <location>
        <begin position="247"/>
        <end position="249"/>
    </location>
</feature>
<feature type="helix" evidence="10">
    <location>
        <begin position="251"/>
        <end position="256"/>
    </location>
</feature>
<feature type="strand" evidence="10">
    <location>
        <begin position="258"/>
        <end position="261"/>
    </location>
</feature>
<feature type="helix" evidence="10">
    <location>
        <begin position="264"/>
        <end position="267"/>
    </location>
</feature>
<feature type="turn" evidence="10">
    <location>
        <begin position="269"/>
        <end position="271"/>
    </location>
</feature>
<feature type="helix" evidence="10">
    <location>
        <begin position="272"/>
        <end position="276"/>
    </location>
</feature>
<feature type="strand" evidence="10">
    <location>
        <begin position="278"/>
        <end position="282"/>
    </location>
</feature>
<feature type="helix" evidence="10">
    <location>
        <begin position="286"/>
        <end position="288"/>
    </location>
</feature>
<feature type="helix" evidence="10">
    <location>
        <begin position="293"/>
        <end position="295"/>
    </location>
</feature>
<feature type="helix" evidence="10">
    <location>
        <begin position="296"/>
        <end position="316"/>
    </location>
</feature>
<feature type="strand" evidence="10">
    <location>
        <begin position="320"/>
        <end position="323"/>
    </location>
</feature>
<feature type="turn" evidence="10">
    <location>
        <begin position="334"/>
        <end position="336"/>
    </location>
</feature>
<feature type="helix" evidence="10">
    <location>
        <begin position="346"/>
        <end position="357"/>
    </location>
</feature>
<feature type="strand" evidence="10">
    <location>
        <begin position="359"/>
        <end position="361"/>
    </location>
</feature>
<feature type="strand" evidence="10">
    <location>
        <begin position="363"/>
        <end position="371"/>
    </location>
</feature>
<feature type="helix" evidence="10">
    <location>
        <begin position="373"/>
        <end position="375"/>
    </location>
</feature>
<feature type="helix" evidence="11">
    <location>
        <begin position="381"/>
        <end position="385"/>
    </location>
</feature>
<feature type="strand" evidence="10">
    <location>
        <begin position="398"/>
        <end position="401"/>
    </location>
</feature>
<feature type="helix" evidence="10">
    <location>
        <begin position="407"/>
        <end position="412"/>
    </location>
</feature>
<feature type="strand" evidence="10">
    <location>
        <begin position="414"/>
        <end position="416"/>
    </location>
</feature>
<feature type="helix" evidence="10">
    <location>
        <begin position="417"/>
        <end position="442"/>
    </location>
</feature>
<feature type="turn" evidence="10">
    <location>
        <begin position="443"/>
        <end position="445"/>
    </location>
</feature>
<feature type="helix" evidence="10">
    <location>
        <begin position="448"/>
        <end position="451"/>
    </location>
</feature>
<protein>
    <recommendedName>
        <fullName evidence="7">Glycerol-3-phosphate acyltransferase ATS12, chloroplastic</fullName>
        <shortName evidence="6">G3PAT</shortName>
        <shortName evidence="5">GPAT</shortName>
        <ecNumber evidence="2 3">2.3.1.15</ecNumber>
        <ecNumber evidence="4">2.3.1.n5</ecNumber>
    </recommendedName>
</protein>
<evidence type="ECO:0000255" key="1"/>
<evidence type="ECO:0000269" key="2">
    <source>
    </source>
</evidence>
<evidence type="ECO:0000269" key="3">
    <source>
    </source>
</evidence>
<evidence type="ECO:0000269" key="4">
    <source ref="3"/>
</evidence>
<evidence type="ECO:0000303" key="5">
    <source>
    </source>
</evidence>
<evidence type="ECO:0000303" key="6">
    <source>
    </source>
</evidence>
<evidence type="ECO:0000305" key="7"/>
<evidence type="ECO:0000305" key="8">
    <source>
    </source>
</evidence>
<evidence type="ECO:0000305" key="9">
    <source ref="3"/>
</evidence>
<evidence type="ECO:0007829" key="10">
    <source>
        <dbReference type="PDB" id="1IUQ"/>
    </source>
</evidence>
<evidence type="ECO:0007829" key="11">
    <source>
        <dbReference type="PDB" id="1K30"/>
    </source>
</evidence>
<comment type="function">
    <text evidence="2 3 4 7 9">Esterifies the acyl-group from acyl-acyl carrier proteins (acyl-ACPs) to the sn-1 position of glycerol-3-phosphate (Ref.3). The physiological acyl donors in chloroplasts are acyl-ACPs, but acyl-CoAs are used as artificial donor for in vitro reactions (Probable). The enzyme from chilling-resistant plants discriminates against non-fluid palmitic acid and selects oleic acid whereas the enzyme from sensitive plants accepts both fatty acids (Ref.3). Squash is chilling-sensitive (Probable). Does not seem to discriminate between the acyl-ACP thioesters 18:1-ACP, 18:0-ACP and 16:0-ACP (Ref.3). Exhibits higher selectivity for 16:0-CoA than 18:1-CoA in vitro (PubMed:14684887, PubMed:9016814).</text>
</comment>
<comment type="catalytic activity">
    <reaction evidence="4">
        <text>a fatty acyl-[ACP] + sn-glycerol 3-phosphate = a 1-acyl-sn-glycero-3-phosphate + holo-[ACP]</text>
        <dbReference type="Rhea" id="RHEA:42300"/>
        <dbReference type="Rhea" id="RHEA-COMP:9685"/>
        <dbReference type="Rhea" id="RHEA-COMP:14125"/>
        <dbReference type="ChEBI" id="CHEBI:57597"/>
        <dbReference type="ChEBI" id="CHEBI:57970"/>
        <dbReference type="ChEBI" id="CHEBI:64479"/>
        <dbReference type="ChEBI" id="CHEBI:138651"/>
        <dbReference type="EC" id="2.3.1.n5"/>
    </reaction>
    <physiologicalReaction direction="left-to-right" evidence="7">
        <dbReference type="Rhea" id="RHEA:42301"/>
    </physiologicalReaction>
</comment>
<comment type="catalytic activity">
    <reaction evidence="2 3">
        <text>sn-glycerol 3-phosphate + an acyl-CoA = a 1-acyl-sn-glycero-3-phosphate + CoA</text>
        <dbReference type="Rhea" id="RHEA:15325"/>
        <dbReference type="ChEBI" id="CHEBI:57287"/>
        <dbReference type="ChEBI" id="CHEBI:57597"/>
        <dbReference type="ChEBI" id="CHEBI:57970"/>
        <dbReference type="ChEBI" id="CHEBI:58342"/>
        <dbReference type="EC" id="2.3.1.15"/>
    </reaction>
    <physiologicalReaction direction="left-to-right" evidence="7">
        <dbReference type="Rhea" id="RHEA:15326"/>
    </physiologicalReaction>
</comment>
<comment type="pathway">
    <text evidence="7">Phospholipid metabolism; CDP-diacylglycerol biosynthesis; CDP-diacylglycerol from sn-glycerol 3-phosphate: step 1/3.</text>
</comment>
<comment type="subcellular location">
    <subcellularLocation>
        <location evidence="7">Plastid</location>
        <location evidence="7">Chloroplast stroma</location>
    </subcellularLocation>
</comment>
<comment type="domain">
    <text evidence="8">The HXXXXD motif is essential for acyltransferase activity and may constitute the binding site for the phosphate moiety of the glycerol-3-phosphate.</text>
</comment>
<comment type="similarity">
    <text evidence="7">Belongs to the GPAT/DAPAT family.</text>
</comment>
<gene>
    <name evidence="5" type="primary">ATS1;2</name>
    <name evidence="7" type="synonym">AT2</name>
</gene>
<sequence length="462" mass="50717">MFILSSSSSTLPSAPPFSSTTSIFLSFSRVSLPPSSSSLKLLPLSLQFGPPKLASSCSLRFSASRAMAELIQDKESAQSAATAAAASSGYERRNEPAHSRKFLDVRSEEELLSCIKKETEAGKLPPNVAAGMEELYQNYRNAVIESGNPKADEIVLSNMTVALDRILLDVEDPFVFSSHHKAIREPFDYYIFGQNYIRPLIDFGNSFVGNLSLFKDIEEKLQQGHNVVLISNHQTEADPAIISLLLEKTNPYIAENTIFVAGDRVLADPLCKPFSIGRNLICVYSKKHMFDIPELTETKRKANTRSLKEMALLLRGGSQLIWIAPSGGRDRPDPSTGEWYPAPFDASSVDNMRRLIQHSDVPGHLFPLALLCHDIMPPPSQVEIEIGEKRVIAFNGAGLSVAPEISFEEIAATHKNPEEVREAYSKALFDSVAMQYNVLKTAISGKQGLGASTADVSLSQPW</sequence>
<dbReference type="EC" id="2.3.1.15" evidence="2 3"/>
<dbReference type="EC" id="2.3.1.n5" evidence="4"/>
<dbReference type="EMBL" id="AB042401">
    <property type="protein sequence ID" value="BAB17755.1"/>
    <property type="molecule type" value="mRNA"/>
</dbReference>
<dbReference type="EMBL" id="AB049135">
    <property type="protein sequence ID" value="BAB39689.1"/>
    <property type="molecule type" value="Genomic_DNA"/>
</dbReference>
<dbReference type="EMBL" id="Y00771">
    <property type="protein sequence ID" value="CAA68740.1"/>
    <property type="molecule type" value="mRNA"/>
</dbReference>
<dbReference type="PIR" id="S01660">
    <property type="entry name" value="S01660"/>
</dbReference>
<dbReference type="RefSeq" id="NP_001413468.1">
    <property type="nucleotide sequence ID" value="NM_001426539.1"/>
</dbReference>
<dbReference type="PDB" id="1IUQ">
    <property type="method" value="X-ray"/>
    <property type="resolution" value="1.55 A"/>
    <property type="chains" value="A=98-462"/>
</dbReference>
<dbReference type="PDB" id="1K30">
    <property type="method" value="X-ray"/>
    <property type="resolution" value="1.90 A"/>
    <property type="chains" value="A=98-462"/>
</dbReference>
<dbReference type="PDBsum" id="1IUQ"/>
<dbReference type="PDBsum" id="1K30"/>
<dbReference type="SMR" id="P10349"/>
<dbReference type="GeneID" id="111437394"/>
<dbReference type="BRENDA" id="2.3.1.15">
    <property type="organism ID" value="1739"/>
</dbReference>
<dbReference type="SABIO-RK" id="P10349"/>
<dbReference type="UniPathway" id="UPA00557">
    <property type="reaction ID" value="UER00612"/>
</dbReference>
<dbReference type="EvolutionaryTrace" id="P10349"/>
<dbReference type="Proteomes" id="UP000504609">
    <property type="component" value="Unplaced"/>
</dbReference>
<dbReference type="GO" id="GO:0009570">
    <property type="term" value="C:chloroplast stroma"/>
    <property type="evidence" value="ECO:0007669"/>
    <property type="project" value="UniProtKB-SubCell"/>
</dbReference>
<dbReference type="GO" id="GO:0004366">
    <property type="term" value="F:glycerol-3-phosphate O-acyltransferase activity"/>
    <property type="evidence" value="ECO:0007669"/>
    <property type="project" value="UniProtKB-EC"/>
</dbReference>
<dbReference type="GO" id="GO:0016024">
    <property type="term" value="P:CDP-diacylglycerol biosynthetic process"/>
    <property type="evidence" value="ECO:0007669"/>
    <property type="project" value="UniProtKB-UniPathway"/>
</dbReference>
<dbReference type="GO" id="GO:0006655">
    <property type="term" value="P:phosphatidylglycerol biosynthetic process"/>
    <property type="evidence" value="ECO:0007669"/>
    <property type="project" value="TreeGrafter"/>
</dbReference>
<dbReference type="CDD" id="cd07985">
    <property type="entry name" value="LPLAT_GPAT"/>
    <property type="match status" value="1"/>
</dbReference>
<dbReference type="Gene3D" id="3.40.1130.10">
    <property type="entry name" value="Glycerol-3-phosphate (1)-acyltransferase"/>
    <property type="match status" value="1"/>
</dbReference>
<dbReference type="Gene3D" id="1.10.1200.50">
    <property type="entry name" value="Glycerol-3-phosphate acyltransferase, alpha helical bundle, N-terminal"/>
    <property type="match status" value="1"/>
</dbReference>
<dbReference type="InterPro" id="IPR016222">
    <property type="entry name" value="G3P_O-acylTrfase_chlp"/>
</dbReference>
<dbReference type="InterPro" id="IPR023083">
    <property type="entry name" value="G3P_O-acylTrfase_N"/>
</dbReference>
<dbReference type="InterPro" id="IPR038114">
    <property type="entry name" value="GPAT_N_sf"/>
</dbReference>
<dbReference type="InterPro" id="IPR002123">
    <property type="entry name" value="Plipid/glycerol_acylTrfase"/>
</dbReference>
<dbReference type="PANTHER" id="PTHR35695">
    <property type="entry name" value="GLYCEROL-3-PHOSPHATE ACYLTRANSFERASE, CHLOROPLASTIC"/>
    <property type="match status" value="1"/>
</dbReference>
<dbReference type="PANTHER" id="PTHR35695:SF1">
    <property type="entry name" value="GLYCEROL-3-PHOSPHATE ACYLTRANSFERASE, CHLOROPLASTIC"/>
    <property type="match status" value="1"/>
</dbReference>
<dbReference type="Pfam" id="PF01553">
    <property type="entry name" value="Acyltransferase"/>
    <property type="match status" value="1"/>
</dbReference>
<dbReference type="Pfam" id="PF14829">
    <property type="entry name" value="GPAT_N"/>
    <property type="match status" value="1"/>
</dbReference>
<dbReference type="PIRSF" id="PIRSF000431">
    <property type="entry name" value="Glycerol-3-P_O-acyltransfrase"/>
    <property type="match status" value="1"/>
</dbReference>
<dbReference type="SMART" id="SM00563">
    <property type="entry name" value="PlsC"/>
    <property type="match status" value="1"/>
</dbReference>
<dbReference type="SUPFAM" id="SSF69593">
    <property type="entry name" value="Glycerol-3-phosphate (1)-acyltransferase"/>
    <property type="match status" value="1"/>
</dbReference>